<proteinExistence type="inferred from homology"/>
<name>CAURO_UROYA</name>
<evidence type="ECO:0000250" key="1">
    <source>
        <dbReference type="UniProtKB" id="A0A1L4BJ42"/>
    </source>
</evidence>
<evidence type="ECO:0000250" key="2">
    <source>
        <dbReference type="UniProtKB" id="B8QG00"/>
    </source>
</evidence>
<evidence type="ECO:0000250" key="3">
    <source>
        <dbReference type="UniProtKB" id="P59868"/>
    </source>
</evidence>
<evidence type="ECO:0000250" key="4">
    <source>
        <dbReference type="UniProtKB" id="P60254"/>
    </source>
</evidence>
<evidence type="ECO:0000255" key="5"/>
<evidence type="ECO:0000269" key="6">
    <source>
    </source>
</evidence>
<evidence type="ECO:0000303" key="7">
    <source>
    </source>
</evidence>
<evidence type="ECO:0000305" key="8"/>
<evidence type="ECO:0000305" key="9">
    <source>
    </source>
</evidence>
<evidence type="ECO:0000312" key="10">
    <source>
        <dbReference type="EMBL" id="AGA82762.1"/>
    </source>
</evidence>
<keyword id="KW-0108">Calcium channel impairing toxin</keyword>
<keyword id="KW-1015">Disulfide bond</keyword>
<keyword id="KW-0872">Ion channel impairing toxin</keyword>
<keyword id="KW-0960">Knottin</keyword>
<keyword id="KW-0528">Neurotoxin</keyword>
<keyword id="KW-1219">Ryanodine-sensitive calcium-release channel impairing toxin</keyword>
<keyword id="KW-0964">Secreted</keyword>
<keyword id="KW-0732">Signal</keyword>
<keyword id="KW-0800">Toxin</keyword>
<feature type="signal peptide" evidence="5">
    <location>
        <begin position="1"/>
        <end position="27"/>
    </location>
</feature>
<feature type="propeptide" id="PRO_5001091939" evidence="5">
    <location>
        <begin position="28"/>
        <end position="35"/>
    </location>
</feature>
<feature type="chain" id="PRO_5001091940" description="Urocalcin">
    <location>
        <begin position="36"/>
        <end position="68"/>
    </location>
</feature>
<feature type="region of interest" description="Essential for stimulation of [3H]ryanodine binding to RYR1" evidence="3 4">
    <location>
        <begin position="57"/>
        <end position="59"/>
    </location>
</feature>
<feature type="site" description="Essential for stimulation of [3H]ryanodine binding to RYR1" evidence="3">
    <location>
        <position position="66"/>
    </location>
</feature>
<feature type="site" description="Essential for stimulation of [3H]ryanodine binding to RYR1" evidence="3">
    <location>
        <position position="68"/>
    </location>
</feature>
<feature type="disulfide bond" evidence="3">
    <location>
        <begin position="38"/>
        <end position="52"/>
    </location>
</feature>
<feature type="disulfide bond" evidence="3">
    <location>
        <begin position="45"/>
        <end position="56"/>
    </location>
</feature>
<feature type="disulfide bond" evidence="3">
    <location>
        <begin position="51"/>
        <end position="67"/>
    </location>
</feature>
<organism>
    <name type="scientific">Urodacus yaschenkoi</name>
    <name type="common">Inland robust scorpion</name>
    <dbReference type="NCBI Taxonomy" id="1273102"/>
    <lineage>
        <taxon>Eukaryota</taxon>
        <taxon>Metazoa</taxon>
        <taxon>Ecdysozoa</taxon>
        <taxon>Arthropoda</taxon>
        <taxon>Chelicerata</taxon>
        <taxon>Arachnida</taxon>
        <taxon>Scorpiones</taxon>
        <taxon>Iurida</taxon>
        <taxon>Scorpionoidea</taxon>
        <taxon>Scorpionidae</taxon>
        <taxon>Urodacinae</taxon>
        <taxon>Urodacus</taxon>
    </lineage>
</organism>
<reference key="1">
    <citation type="journal article" date="2013" name="Toxicon">
        <title>Characterization of the venom from the Australian scorpion Urodacus yaschenkoi: molecular mass analysis of components, cDNA sequences and peptides with antimicrobial activity.</title>
        <authorList>
            <person name="Luna-Ramirez K."/>
            <person name="Quintero-Hernandez V."/>
            <person name="Vargas-Jaimes L."/>
            <person name="Batista C.V."/>
            <person name="Winkel K.D."/>
            <person name="Possani L.D."/>
        </authorList>
    </citation>
    <scope>NUCLEOTIDE SEQUENCE [MRNA]</scope>
    <source>
        <tissue>Venom gland</tissue>
    </source>
</reference>
<reference key="2">
    <citation type="journal article" date="2016" name="J. Gen. Physiol.">
        <title>Structure-function relationships of peptides forming the calcin family of ryanodine receptor ligands.</title>
        <authorList>
            <person name="Xiao L."/>
            <person name="Gurrola G.B."/>
            <person name="Zhang J."/>
            <person name="Valdivia C.R."/>
            <person name="SanMartin M."/>
            <person name="Zamudio F.Z."/>
            <person name="Zhang L."/>
            <person name="Possani L.D."/>
            <person name="Valdivia H.H."/>
        </authorList>
    </citation>
    <scope>FUNCTION</scope>
    <scope>SYNTHESIS OF 36-68</scope>
    <scope>NOMENCLATURE</scope>
    <scope>3D-STRUCTURE MODELING</scope>
</reference>
<sequence>MKASTLVVIFIVIFITISSFSIHDVQASGVEKREQKDCLKKLKLCKENKDCCSKSCKRRGTNIEKRCR</sequence>
<accession>L0GBR1</accession>
<dbReference type="EMBL" id="JX274248">
    <property type="protein sequence ID" value="AGA82762.1"/>
    <property type="molecule type" value="mRNA"/>
</dbReference>
<dbReference type="SMR" id="L0GBR1"/>
<dbReference type="GO" id="GO:0005576">
    <property type="term" value="C:extracellular region"/>
    <property type="evidence" value="ECO:0007669"/>
    <property type="project" value="UniProtKB-SubCell"/>
</dbReference>
<dbReference type="GO" id="GO:0019855">
    <property type="term" value="F:calcium channel inhibitor activity"/>
    <property type="evidence" value="ECO:0007669"/>
    <property type="project" value="InterPro"/>
</dbReference>
<dbReference type="GO" id="GO:0090729">
    <property type="term" value="F:toxin activity"/>
    <property type="evidence" value="ECO:0007669"/>
    <property type="project" value="UniProtKB-KW"/>
</dbReference>
<dbReference type="InterPro" id="IPR012632">
    <property type="entry name" value="Scorpion_calcine"/>
</dbReference>
<dbReference type="Pfam" id="PF08099">
    <property type="entry name" value="Toxin_27"/>
    <property type="match status" value="1"/>
</dbReference>
<dbReference type="SUPFAM" id="SSF57059">
    <property type="entry name" value="omega toxin-like"/>
    <property type="match status" value="1"/>
</dbReference>
<dbReference type="PROSITE" id="PS60028">
    <property type="entry name" value="SCORPION_CALCINE"/>
    <property type="match status" value="1"/>
</dbReference>
<protein>
    <recommendedName>
        <fullName evidence="7">Urocalcin</fullName>
        <shortName evidence="7">UrCa</shortName>
    </recommendedName>
    <alternativeName>
        <fullName evidence="10">Calcium-channel toxin-like 20</fullName>
    </alternativeName>
</protein>
<comment type="function">
    <text evidence="1 2 3 4 6">This toxin only weakly stabilizes ryanodine receptor 1 (RyR1) opening in a long-lasting subconductance state (55% of the full conductance state obtained only at high concentrations (1 uM)) (PubMed:27114612). In addition, it has been shown to dose-dependently stimulate ryanodine binding to RyR1 with the lowest activity of all calcins (EC(50)=376 nM) (PubMed:27114612). It also augments the bell-shaped calcium-[3H]ryanodine binding curve that is maximal at about 10 uM calcium concentration (PubMed:27114612). It binds a different site as ryanodine (By similarity). It acts synergistically with caffeine (By similarity). In contrast to other calcins, it does not trigger calcium release from sarcoplasmic vesicles even at high concentration (1 uM) (PubMed:27114612). In vivo, intracerebroventricular injection into mice induces neurotoxic symptoms, followed by death (By similarity).</text>
</comment>
<comment type="subcellular location">
    <subcellularLocation>
        <location evidence="9">Secreted</location>
    </subcellularLocation>
</comment>
<comment type="tissue specificity">
    <text evidence="9">Expressed by the venom gland.</text>
</comment>
<comment type="domain">
    <text evidence="3">The presence of a 'disulfide through disulfide knot' structurally defines this protein as a knottin.</text>
</comment>
<comment type="similarity">
    <text evidence="8">Belongs to the scorpion calcin family.</text>
</comment>